<evidence type="ECO:0000255" key="1">
    <source>
        <dbReference type="HAMAP-Rule" id="MF_00236"/>
    </source>
</evidence>
<organism>
    <name type="scientific">Histophilus somni (strain 2336)</name>
    <name type="common">Haemophilus somnus</name>
    <dbReference type="NCBI Taxonomy" id="228400"/>
    <lineage>
        <taxon>Bacteria</taxon>
        <taxon>Pseudomonadati</taxon>
        <taxon>Pseudomonadota</taxon>
        <taxon>Gammaproteobacteria</taxon>
        <taxon>Pasteurellales</taxon>
        <taxon>Pasteurellaceae</taxon>
        <taxon>Histophilus</taxon>
    </lineage>
</organism>
<feature type="chain" id="PRO_1000197872" description="Sec-independent protein translocase protein TatA">
    <location>
        <begin position="1"/>
        <end position="73"/>
    </location>
</feature>
<feature type="transmembrane region" description="Helical" evidence="1">
    <location>
        <begin position="1"/>
        <end position="21"/>
    </location>
</feature>
<proteinExistence type="inferred from homology"/>
<sequence>MGLSWQQLLILLLVVVVIFGTKKLRNIGSDLGGAVKDFKKAMNDDQPKDAEFKKISEEVEQTSVENSKQKEQA</sequence>
<gene>
    <name evidence="1" type="primary">tatA</name>
    <name type="ordered locus">HSM_1658</name>
</gene>
<protein>
    <recommendedName>
        <fullName evidence="1">Sec-independent protein translocase protein TatA</fullName>
    </recommendedName>
</protein>
<accession>B0UVD4</accession>
<comment type="function">
    <text evidence="1">Part of the twin-arginine translocation (Tat) system that transports large folded proteins containing a characteristic twin-arginine motif in their signal peptide across membranes. TatA could form the protein-conducting channel of the Tat system.</text>
</comment>
<comment type="subunit">
    <text evidence="1">The Tat system comprises two distinct complexes: a TatABC complex, containing multiple copies of TatA, TatB and TatC subunits, and a separate TatA complex, containing only TatA subunits. Substrates initially bind to the TatABC complex, which probably triggers association of the separate TatA complex to form the active translocon.</text>
</comment>
<comment type="subcellular location">
    <subcellularLocation>
        <location evidence="1">Cell inner membrane</location>
        <topology evidence="1">Single-pass membrane protein</topology>
    </subcellularLocation>
</comment>
<comment type="similarity">
    <text evidence="1">Belongs to the TatA/E family.</text>
</comment>
<dbReference type="EMBL" id="CP000947">
    <property type="protein sequence ID" value="ACA31427.1"/>
    <property type="molecule type" value="Genomic_DNA"/>
</dbReference>
<dbReference type="RefSeq" id="WP_011608702.1">
    <property type="nucleotide sequence ID" value="NC_010519.1"/>
</dbReference>
<dbReference type="SMR" id="B0UVD4"/>
<dbReference type="STRING" id="228400.HSM_1658"/>
<dbReference type="GeneID" id="31487961"/>
<dbReference type="KEGG" id="hsm:HSM_1658"/>
<dbReference type="HOGENOM" id="CLU_086034_5_1_6"/>
<dbReference type="GO" id="GO:0033281">
    <property type="term" value="C:TAT protein transport complex"/>
    <property type="evidence" value="ECO:0007669"/>
    <property type="project" value="UniProtKB-UniRule"/>
</dbReference>
<dbReference type="GO" id="GO:0008320">
    <property type="term" value="F:protein transmembrane transporter activity"/>
    <property type="evidence" value="ECO:0007669"/>
    <property type="project" value="UniProtKB-UniRule"/>
</dbReference>
<dbReference type="GO" id="GO:0043953">
    <property type="term" value="P:protein transport by the Tat complex"/>
    <property type="evidence" value="ECO:0007669"/>
    <property type="project" value="UniProtKB-UniRule"/>
</dbReference>
<dbReference type="Gene3D" id="1.20.5.3310">
    <property type="match status" value="1"/>
</dbReference>
<dbReference type="HAMAP" id="MF_00236">
    <property type="entry name" value="TatA_E"/>
    <property type="match status" value="1"/>
</dbReference>
<dbReference type="InterPro" id="IPR003369">
    <property type="entry name" value="TatA/B/E"/>
</dbReference>
<dbReference type="InterPro" id="IPR006312">
    <property type="entry name" value="TatA/E"/>
</dbReference>
<dbReference type="NCBIfam" id="NF002813">
    <property type="entry name" value="PRK02958.1"/>
    <property type="match status" value="1"/>
</dbReference>
<dbReference type="NCBIfam" id="TIGR01411">
    <property type="entry name" value="tatAE"/>
    <property type="match status" value="1"/>
</dbReference>
<dbReference type="PANTHER" id="PTHR42982">
    <property type="entry name" value="SEC-INDEPENDENT PROTEIN TRANSLOCASE PROTEIN TATA"/>
    <property type="match status" value="1"/>
</dbReference>
<dbReference type="PANTHER" id="PTHR42982:SF1">
    <property type="entry name" value="SEC-INDEPENDENT PROTEIN TRANSLOCASE PROTEIN TATA"/>
    <property type="match status" value="1"/>
</dbReference>
<dbReference type="Pfam" id="PF02416">
    <property type="entry name" value="TatA_B_E"/>
    <property type="match status" value="1"/>
</dbReference>
<name>TATA_HISS2</name>
<keyword id="KW-0997">Cell inner membrane</keyword>
<keyword id="KW-1003">Cell membrane</keyword>
<keyword id="KW-0472">Membrane</keyword>
<keyword id="KW-0653">Protein transport</keyword>
<keyword id="KW-0811">Translocation</keyword>
<keyword id="KW-0812">Transmembrane</keyword>
<keyword id="KW-1133">Transmembrane helix</keyword>
<keyword id="KW-0813">Transport</keyword>
<reference key="1">
    <citation type="submission" date="2008-02" db="EMBL/GenBank/DDBJ databases">
        <title>Complete sequence of Haemophilus somnus 2336.</title>
        <authorList>
            <consortium name="US DOE Joint Genome Institute"/>
            <person name="Siddaramappa S."/>
            <person name="Duncan A.J."/>
            <person name="Challacombe J.F."/>
            <person name="Rainey D."/>
            <person name="Gillaspy A.F."/>
            <person name="Carson M."/>
            <person name="Gipson J."/>
            <person name="Gipson M."/>
            <person name="Bruce D."/>
            <person name="Detter J.C."/>
            <person name="Han C.S."/>
            <person name="Land M."/>
            <person name="Tapia R."/>
            <person name="Thompson L.S."/>
            <person name="Orvis J."/>
            <person name="Zaitshik J."/>
            <person name="Barnes G."/>
            <person name="Brettin T.S."/>
            <person name="Dyer D.W."/>
            <person name="Inzana T.J."/>
        </authorList>
    </citation>
    <scope>NUCLEOTIDE SEQUENCE [LARGE SCALE GENOMIC DNA]</scope>
    <source>
        <strain>2336</strain>
    </source>
</reference>